<keyword id="KW-0456">Lyase</keyword>
<keyword id="KW-0479">Metal-binding</keyword>
<keyword id="KW-1185">Reference proteome</keyword>
<reference key="1">
    <citation type="journal article" date="1993" name="Mol. Microbiol.">
        <title>Bacillus subtilis genome project: cloning and sequencing of the 97 kb region from 325 degrees to 333 degrees.</title>
        <authorList>
            <person name="Glaser P."/>
            <person name="Kunst F."/>
            <person name="Arnaud M."/>
            <person name="Coudart M.P."/>
            <person name="Gonzales W."/>
            <person name="Hullo M.-F."/>
            <person name="Ionescu M."/>
            <person name="Lubochinsky B."/>
            <person name="Marcelino L."/>
            <person name="Moszer I."/>
            <person name="Presecan E."/>
            <person name="Santana M."/>
            <person name="Schneider E."/>
            <person name="Schweizer J."/>
            <person name="Vertes A."/>
            <person name="Rapoport G."/>
            <person name="Danchin A."/>
        </authorList>
    </citation>
    <scope>NUCLEOTIDE SEQUENCE [GENOMIC DNA]</scope>
    <source>
        <strain>168</strain>
    </source>
</reference>
<reference key="2">
    <citation type="journal article" date="1997" name="Nature">
        <title>The complete genome sequence of the Gram-positive bacterium Bacillus subtilis.</title>
        <authorList>
            <person name="Kunst F."/>
            <person name="Ogasawara N."/>
            <person name="Moszer I."/>
            <person name="Albertini A.M."/>
            <person name="Alloni G."/>
            <person name="Azevedo V."/>
            <person name="Bertero M.G."/>
            <person name="Bessieres P."/>
            <person name="Bolotin A."/>
            <person name="Borchert S."/>
            <person name="Borriss R."/>
            <person name="Boursier L."/>
            <person name="Brans A."/>
            <person name="Braun M."/>
            <person name="Brignell S.C."/>
            <person name="Bron S."/>
            <person name="Brouillet S."/>
            <person name="Bruschi C.V."/>
            <person name="Caldwell B."/>
            <person name="Capuano V."/>
            <person name="Carter N.M."/>
            <person name="Choi S.-K."/>
            <person name="Codani J.-J."/>
            <person name="Connerton I.F."/>
            <person name="Cummings N.J."/>
            <person name="Daniel R.A."/>
            <person name="Denizot F."/>
            <person name="Devine K.M."/>
            <person name="Duesterhoeft A."/>
            <person name="Ehrlich S.D."/>
            <person name="Emmerson P.T."/>
            <person name="Entian K.-D."/>
            <person name="Errington J."/>
            <person name="Fabret C."/>
            <person name="Ferrari E."/>
            <person name="Foulger D."/>
            <person name="Fritz C."/>
            <person name="Fujita M."/>
            <person name="Fujita Y."/>
            <person name="Fuma S."/>
            <person name="Galizzi A."/>
            <person name="Galleron N."/>
            <person name="Ghim S.-Y."/>
            <person name="Glaser P."/>
            <person name="Goffeau A."/>
            <person name="Golightly E.J."/>
            <person name="Grandi G."/>
            <person name="Guiseppi G."/>
            <person name="Guy B.J."/>
            <person name="Haga K."/>
            <person name="Haiech J."/>
            <person name="Harwood C.R."/>
            <person name="Henaut A."/>
            <person name="Hilbert H."/>
            <person name="Holsappel S."/>
            <person name="Hosono S."/>
            <person name="Hullo M.-F."/>
            <person name="Itaya M."/>
            <person name="Jones L.-M."/>
            <person name="Joris B."/>
            <person name="Karamata D."/>
            <person name="Kasahara Y."/>
            <person name="Klaerr-Blanchard M."/>
            <person name="Klein C."/>
            <person name="Kobayashi Y."/>
            <person name="Koetter P."/>
            <person name="Koningstein G."/>
            <person name="Krogh S."/>
            <person name="Kumano M."/>
            <person name="Kurita K."/>
            <person name="Lapidus A."/>
            <person name="Lardinois S."/>
            <person name="Lauber J."/>
            <person name="Lazarevic V."/>
            <person name="Lee S.-M."/>
            <person name="Levine A."/>
            <person name="Liu H."/>
            <person name="Masuda S."/>
            <person name="Mauel C."/>
            <person name="Medigue C."/>
            <person name="Medina N."/>
            <person name="Mellado R.P."/>
            <person name="Mizuno M."/>
            <person name="Moestl D."/>
            <person name="Nakai S."/>
            <person name="Noback M."/>
            <person name="Noone D."/>
            <person name="O'Reilly M."/>
            <person name="Ogawa K."/>
            <person name="Ogiwara A."/>
            <person name="Oudega B."/>
            <person name="Park S.-H."/>
            <person name="Parro V."/>
            <person name="Pohl T.M."/>
            <person name="Portetelle D."/>
            <person name="Porwollik S."/>
            <person name="Prescott A.M."/>
            <person name="Presecan E."/>
            <person name="Pujic P."/>
            <person name="Purnelle B."/>
            <person name="Rapoport G."/>
            <person name="Rey M."/>
            <person name="Reynolds S."/>
            <person name="Rieger M."/>
            <person name="Rivolta C."/>
            <person name="Rocha E."/>
            <person name="Roche B."/>
            <person name="Rose M."/>
            <person name="Sadaie Y."/>
            <person name="Sato T."/>
            <person name="Scanlan E."/>
            <person name="Schleich S."/>
            <person name="Schroeter R."/>
            <person name="Scoffone F."/>
            <person name="Sekiguchi J."/>
            <person name="Sekowska A."/>
            <person name="Seror S.J."/>
            <person name="Serror P."/>
            <person name="Shin B.-S."/>
            <person name="Soldo B."/>
            <person name="Sorokin A."/>
            <person name="Tacconi E."/>
            <person name="Takagi T."/>
            <person name="Takahashi H."/>
            <person name="Takemaru K."/>
            <person name="Takeuchi M."/>
            <person name="Tamakoshi A."/>
            <person name="Tanaka T."/>
            <person name="Terpstra P."/>
            <person name="Tognoni A."/>
            <person name="Tosato V."/>
            <person name="Uchiyama S."/>
            <person name="Vandenbol M."/>
            <person name="Vannier F."/>
            <person name="Vassarotti A."/>
            <person name="Viari A."/>
            <person name="Wambutt R."/>
            <person name="Wedler E."/>
            <person name="Wedler H."/>
            <person name="Weitzenegger T."/>
            <person name="Winters P."/>
            <person name="Wipat A."/>
            <person name="Yamamoto H."/>
            <person name="Yamane K."/>
            <person name="Yasumoto K."/>
            <person name="Yata K."/>
            <person name="Yoshida K."/>
            <person name="Yoshikawa H.-F."/>
            <person name="Zumstein E."/>
            <person name="Yoshikawa H."/>
            <person name="Danchin A."/>
        </authorList>
    </citation>
    <scope>NUCLEOTIDE SEQUENCE [LARGE SCALE GENOMIC DNA]</scope>
    <source>
        <strain>168</strain>
    </source>
</reference>
<organism>
    <name type="scientific">Bacillus subtilis (strain 168)</name>
    <dbReference type="NCBI Taxonomy" id="224308"/>
    <lineage>
        <taxon>Bacteria</taxon>
        <taxon>Bacillati</taxon>
        <taxon>Bacillota</taxon>
        <taxon>Bacilli</taxon>
        <taxon>Bacillales</taxon>
        <taxon>Bacillaceae</taxon>
        <taxon>Bacillus</taxon>
    </lineage>
</organism>
<name>YWBC_BACSU</name>
<evidence type="ECO:0000255" key="1">
    <source>
        <dbReference type="PROSITE-ProRule" id="PRU01163"/>
    </source>
</evidence>
<evidence type="ECO:0000305" key="2"/>
<feature type="chain" id="PRO_0000168101" description="Uncharacterized protein YwbC">
    <location>
        <begin position="1"/>
        <end position="126"/>
    </location>
</feature>
<feature type="domain" description="VOC" evidence="1">
    <location>
        <begin position="4"/>
        <end position="126"/>
    </location>
</feature>
<feature type="binding site" evidence="1">
    <location>
        <position position="7"/>
    </location>
    <ligand>
        <name>a divalent metal cation</name>
        <dbReference type="ChEBI" id="CHEBI:60240"/>
    </ligand>
</feature>
<feature type="binding site" evidence="1">
    <location>
        <position position="42"/>
    </location>
    <ligand>
        <name>a divalent metal cation</name>
        <dbReference type="ChEBI" id="CHEBI:60240"/>
    </ligand>
</feature>
<feature type="binding site" evidence="1">
    <location>
        <position position="74"/>
    </location>
    <ligand>
        <name>a divalent metal cation</name>
        <dbReference type="ChEBI" id="CHEBI:60240"/>
    </ligand>
</feature>
<feature type="binding site" evidence="1">
    <location>
        <position position="122"/>
    </location>
    <ligand>
        <name>a divalent metal cation</name>
        <dbReference type="ChEBI" id="CHEBI:60240"/>
    </ligand>
</feature>
<gene>
    <name type="primary">ywbC</name>
    <name type="ordered locus">BSU38370</name>
    <name type="ORF">ipa-18r</name>
</gene>
<protein>
    <recommendedName>
        <fullName>Uncharacterized protein YwbC</fullName>
    </recommendedName>
</protein>
<proteinExistence type="inferred from homology"/>
<dbReference type="EMBL" id="X73124">
    <property type="protein sequence ID" value="CAA51574.1"/>
    <property type="molecule type" value="Genomic_DNA"/>
</dbReference>
<dbReference type="EMBL" id="AL009126">
    <property type="protein sequence ID" value="CAB15863.1"/>
    <property type="molecule type" value="Genomic_DNA"/>
</dbReference>
<dbReference type="PIR" id="S39673">
    <property type="entry name" value="S39673"/>
</dbReference>
<dbReference type="SMR" id="P39586"/>
<dbReference type="FunCoup" id="P39586">
    <property type="interactions" value="538"/>
</dbReference>
<dbReference type="STRING" id="224308.BSU38370"/>
<dbReference type="PaxDb" id="224308-BSU38370"/>
<dbReference type="EnsemblBacteria" id="CAB15863">
    <property type="protein sequence ID" value="CAB15863"/>
    <property type="gene ID" value="BSU_38370"/>
</dbReference>
<dbReference type="GeneID" id="937329"/>
<dbReference type="KEGG" id="bsu:BSU38370"/>
<dbReference type="PATRIC" id="fig|224308.179.peg.4153"/>
<dbReference type="eggNOG" id="COG0346">
    <property type="taxonomic scope" value="Bacteria"/>
</dbReference>
<dbReference type="InParanoid" id="P39586"/>
<dbReference type="OrthoDB" id="371072at2"/>
<dbReference type="PhylomeDB" id="P39586"/>
<dbReference type="BioCyc" id="BSUB:BSU38370-MONOMER"/>
<dbReference type="Proteomes" id="UP000001570">
    <property type="component" value="Chromosome"/>
</dbReference>
<dbReference type="GO" id="GO:0004462">
    <property type="term" value="F:lactoylglutathione lyase activity"/>
    <property type="evidence" value="ECO:0007669"/>
    <property type="project" value="InterPro"/>
</dbReference>
<dbReference type="GO" id="GO:0046872">
    <property type="term" value="F:metal ion binding"/>
    <property type="evidence" value="ECO:0007669"/>
    <property type="project" value="UniProtKB-KW"/>
</dbReference>
<dbReference type="GO" id="GO:0004493">
    <property type="term" value="F:methylmalonyl-CoA epimerase activity"/>
    <property type="evidence" value="ECO:0000318"/>
    <property type="project" value="GO_Central"/>
</dbReference>
<dbReference type="GO" id="GO:0046491">
    <property type="term" value="P:L-methylmalonyl-CoA metabolic process"/>
    <property type="evidence" value="ECO:0000318"/>
    <property type="project" value="GO_Central"/>
</dbReference>
<dbReference type="CDD" id="cd06587">
    <property type="entry name" value="VOC"/>
    <property type="match status" value="1"/>
</dbReference>
<dbReference type="Gene3D" id="3.10.180.10">
    <property type="entry name" value="2,3-Dihydroxybiphenyl 1,2-Dioxygenase, domain 1"/>
    <property type="match status" value="1"/>
</dbReference>
<dbReference type="InterPro" id="IPR029068">
    <property type="entry name" value="Glyas_Bleomycin-R_OHBP_Dase"/>
</dbReference>
<dbReference type="InterPro" id="IPR004360">
    <property type="entry name" value="Glyas_Fos-R_dOase_dom"/>
</dbReference>
<dbReference type="InterPro" id="IPR018146">
    <property type="entry name" value="Glyoxalase_1_CS"/>
</dbReference>
<dbReference type="InterPro" id="IPR051785">
    <property type="entry name" value="MMCE/EMCE_epimerase"/>
</dbReference>
<dbReference type="InterPro" id="IPR037523">
    <property type="entry name" value="VOC"/>
</dbReference>
<dbReference type="PANTHER" id="PTHR43048">
    <property type="entry name" value="METHYLMALONYL-COA EPIMERASE"/>
    <property type="match status" value="1"/>
</dbReference>
<dbReference type="PANTHER" id="PTHR43048:SF3">
    <property type="entry name" value="METHYLMALONYL-COA EPIMERASE, MITOCHONDRIAL"/>
    <property type="match status" value="1"/>
</dbReference>
<dbReference type="Pfam" id="PF00903">
    <property type="entry name" value="Glyoxalase"/>
    <property type="match status" value="1"/>
</dbReference>
<dbReference type="SUPFAM" id="SSF54593">
    <property type="entry name" value="Glyoxalase/Bleomycin resistance protein/Dihydroxybiphenyl dioxygenase"/>
    <property type="match status" value="1"/>
</dbReference>
<dbReference type="PROSITE" id="PS00934">
    <property type="entry name" value="GLYOXALASE_I_1"/>
    <property type="match status" value="1"/>
</dbReference>
<dbReference type="PROSITE" id="PS51819">
    <property type="entry name" value="VOC"/>
    <property type="match status" value="1"/>
</dbReference>
<comment type="similarity">
    <text evidence="2">Belongs to the glyoxalase I family.</text>
</comment>
<accession>P39586</accession>
<sequence>MAKRIDHTGIMVRDINASITFYEEVLGMKLKDRITHTNGVIELAFLGFEDGPETEIELIQGYSSELPAEGKVHHIALLTDDIAAEYTKAEKMNAKFIDEEITTLPNGYRYFYIEGPDGEWIEFFQR</sequence>